<dbReference type="EMBL" id="M82967">
    <property type="protein sequence ID" value="AAA36625.1"/>
    <property type="molecule type" value="mRNA"/>
</dbReference>
<dbReference type="EMBL" id="M82968">
    <property type="protein sequence ID" value="AAA36626.1"/>
    <property type="molecule type" value="mRNA"/>
</dbReference>
<dbReference type="EMBL" id="S65583">
    <property type="protein sequence ID" value="AAB28238.2"/>
    <property type="molecule type" value="Genomic_DNA"/>
</dbReference>
<dbReference type="EMBL" id="S65606">
    <property type="protein sequence ID" value="AAB28238.2"/>
    <property type="status" value="JOINED"/>
    <property type="molecule type" value="Genomic_DNA"/>
</dbReference>
<dbReference type="EMBL" id="S65576">
    <property type="protein sequence ID" value="AAB28238.2"/>
    <property type="status" value="JOINED"/>
    <property type="molecule type" value="Genomic_DNA"/>
</dbReference>
<dbReference type="EMBL" id="S65578">
    <property type="protein sequence ID" value="AAB28238.2"/>
    <property type="status" value="JOINED"/>
    <property type="molecule type" value="Genomic_DNA"/>
</dbReference>
<dbReference type="EMBL" id="AK223335">
    <property type="protein sequence ID" value="BAD97055.1"/>
    <property type="molecule type" value="mRNA"/>
</dbReference>
<dbReference type="EMBL" id="BC014588">
    <property type="protein sequence ID" value="AAH14588.1"/>
    <property type="molecule type" value="mRNA"/>
</dbReference>
<dbReference type="CCDS" id="CCDS44759.1">
    <molecule id="P26436-2"/>
</dbReference>
<dbReference type="CCDS" id="CCDS44761.1">
    <molecule id="P26436-4"/>
</dbReference>
<dbReference type="CCDS" id="CCDS8460.1">
    <molecule id="P26436-1"/>
</dbReference>
<dbReference type="CCDS" id="CCDS8461.1">
    <molecule id="P26436-3"/>
</dbReference>
<dbReference type="PIR" id="A37225">
    <property type="entry name" value="A37225"/>
</dbReference>
<dbReference type="PIR" id="B37225">
    <property type="entry name" value="B37225"/>
</dbReference>
<dbReference type="RefSeq" id="NP_001603.1">
    <molecule id="P26436-1"/>
    <property type="nucleotide sequence ID" value="NM_001612.6"/>
</dbReference>
<dbReference type="RefSeq" id="NP_064454.1">
    <molecule id="P26436-2"/>
    <property type="nucleotide sequence ID" value="NM_020069.5"/>
</dbReference>
<dbReference type="RefSeq" id="NP_064492.1">
    <molecule id="P26436-3"/>
    <property type="nucleotide sequence ID" value="NM_020107.5"/>
</dbReference>
<dbReference type="RefSeq" id="NP_064493.1">
    <molecule id="P26436-4"/>
    <property type="nucleotide sequence ID" value="NM_020108.5"/>
</dbReference>
<dbReference type="BioGRID" id="106572">
    <property type="interactions" value="3"/>
</dbReference>
<dbReference type="FunCoup" id="P26436">
    <property type="interactions" value="6"/>
</dbReference>
<dbReference type="IntAct" id="P26436">
    <property type="interactions" value="7"/>
</dbReference>
<dbReference type="MINT" id="P26436"/>
<dbReference type="STRING" id="9606.ENSP00000432816"/>
<dbReference type="GlyCosmos" id="P26436">
    <property type="glycosylation" value="1 site, No reported glycans"/>
</dbReference>
<dbReference type="GlyGen" id="P26436">
    <property type="glycosylation" value="1 site"/>
</dbReference>
<dbReference type="BioMuta" id="ACRV1"/>
<dbReference type="DMDM" id="1351991"/>
<dbReference type="MassIVE" id="P26436"/>
<dbReference type="PaxDb" id="9606-ENSP00000432816"/>
<dbReference type="PeptideAtlas" id="P26436"/>
<dbReference type="ProteomicsDB" id="54335">
    <molecule id="P26436-1"/>
</dbReference>
<dbReference type="ProteomicsDB" id="54336">
    <molecule id="P26436-10"/>
</dbReference>
<dbReference type="ProteomicsDB" id="54337">
    <molecule id="P26436-11"/>
</dbReference>
<dbReference type="ProteomicsDB" id="54338">
    <molecule id="P26436-2"/>
</dbReference>
<dbReference type="ProteomicsDB" id="54339">
    <molecule id="P26436-3"/>
</dbReference>
<dbReference type="ProteomicsDB" id="54340">
    <molecule id="P26436-4"/>
</dbReference>
<dbReference type="ProteomicsDB" id="54341">
    <molecule id="P26436-5"/>
</dbReference>
<dbReference type="ProteomicsDB" id="54342">
    <molecule id="P26436-6"/>
</dbReference>
<dbReference type="ProteomicsDB" id="54343">
    <molecule id="P26436-7"/>
</dbReference>
<dbReference type="ProteomicsDB" id="54344">
    <molecule id="P26436-8"/>
</dbReference>
<dbReference type="ProteomicsDB" id="54345">
    <molecule id="P26436-9"/>
</dbReference>
<dbReference type="Antibodypedia" id="32960">
    <property type="antibodies" value="215 antibodies from 25 providers"/>
</dbReference>
<dbReference type="DNASU" id="56"/>
<dbReference type="Ensembl" id="ENST00000315608.7">
    <molecule id="P26436-2"/>
    <property type="protein sequence ID" value="ENSP00000317684.3"/>
    <property type="gene ID" value="ENSG00000134940.14"/>
</dbReference>
<dbReference type="Ensembl" id="ENST00000527795.1">
    <molecule id="P26436-4"/>
    <property type="protein sequence ID" value="ENSP00000436819.1"/>
    <property type="gene ID" value="ENSG00000134940.14"/>
</dbReference>
<dbReference type="Ensembl" id="ENST00000530048.5">
    <molecule id="P26436-3"/>
    <property type="protein sequence ID" value="ENSP00000433720.1"/>
    <property type="gene ID" value="ENSG00000134940.14"/>
</dbReference>
<dbReference type="Ensembl" id="ENST00000533904.6">
    <molecule id="P26436-1"/>
    <property type="protein sequence ID" value="ENSP00000432816.1"/>
    <property type="gene ID" value="ENSG00000134940.14"/>
</dbReference>
<dbReference type="GeneID" id="56"/>
<dbReference type="KEGG" id="hsa:56"/>
<dbReference type="MANE-Select" id="ENST00000533904.6">
    <property type="protein sequence ID" value="ENSP00000432816.1"/>
    <property type="RefSeq nucleotide sequence ID" value="NM_001612.6"/>
    <property type="RefSeq protein sequence ID" value="NP_001603.1"/>
</dbReference>
<dbReference type="UCSC" id="uc001qcl.4">
    <molecule id="P26436-1"/>
    <property type="organism name" value="human"/>
</dbReference>
<dbReference type="AGR" id="HGNC:127"/>
<dbReference type="CTD" id="56"/>
<dbReference type="DisGeNET" id="56"/>
<dbReference type="GeneCards" id="ACRV1"/>
<dbReference type="HGNC" id="HGNC:127">
    <property type="gene designation" value="ACRV1"/>
</dbReference>
<dbReference type="HPA" id="ENSG00000134940">
    <property type="expression patterns" value="Tissue enriched (testis)"/>
</dbReference>
<dbReference type="MalaCards" id="ACRV1"/>
<dbReference type="MIM" id="102525">
    <property type="type" value="gene"/>
</dbReference>
<dbReference type="neXtProt" id="NX_P26436"/>
<dbReference type="OpenTargets" id="ENSG00000134940"/>
<dbReference type="PharmGKB" id="PA24454"/>
<dbReference type="VEuPathDB" id="HostDB:ENSG00000134940"/>
<dbReference type="eggNOG" id="ENOG502QRB1">
    <property type="taxonomic scope" value="Eukaryota"/>
</dbReference>
<dbReference type="GeneTree" id="ENSGT00940000162351"/>
<dbReference type="HOGENOM" id="CLU_070242_0_0_1"/>
<dbReference type="InParanoid" id="P26436"/>
<dbReference type="OMA" id="VLNCHTC"/>
<dbReference type="OrthoDB" id="4779276at2759"/>
<dbReference type="PAN-GO" id="P26436">
    <property type="GO annotations" value="0 GO annotations based on evolutionary models"/>
</dbReference>
<dbReference type="PhylomeDB" id="P26436"/>
<dbReference type="TreeFam" id="TF337781"/>
<dbReference type="PathwayCommons" id="P26436"/>
<dbReference type="SignaLink" id="P26436"/>
<dbReference type="BioGRID-ORCS" id="56">
    <property type="hits" value="14 hits in 1134 CRISPR screens"/>
</dbReference>
<dbReference type="GeneWiki" id="ACRV1"/>
<dbReference type="GenomeRNAi" id="56"/>
<dbReference type="Pharos" id="P26436">
    <property type="development level" value="Tbio"/>
</dbReference>
<dbReference type="PRO" id="PR:P26436"/>
<dbReference type="Proteomes" id="UP000005640">
    <property type="component" value="Chromosome 11"/>
</dbReference>
<dbReference type="RNAct" id="P26436">
    <property type="molecule type" value="protein"/>
</dbReference>
<dbReference type="Bgee" id="ENSG00000134940">
    <property type="expression patterns" value="Expressed in left testis and 104 other cell types or tissues"/>
</dbReference>
<dbReference type="GO" id="GO:0001669">
    <property type="term" value="C:acrosomal vesicle"/>
    <property type="evidence" value="ECO:0007669"/>
    <property type="project" value="UniProtKB-SubCell"/>
</dbReference>
<dbReference type="GO" id="GO:0007283">
    <property type="term" value="P:spermatogenesis"/>
    <property type="evidence" value="ECO:0000303"/>
    <property type="project" value="UniProtKB"/>
</dbReference>
<dbReference type="CDD" id="cd23628">
    <property type="entry name" value="TFP_LU_ECD_SP10_like"/>
    <property type="match status" value="1"/>
</dbReference>
<dbReference type="InterPro" id="IPR052671">
    <property type="entry name" value="Acrosomal_SP-10-like"/>
</dbReference>
<dbReference type="InterPro" id="IPR016054">
    <property type="entry name" value="LY6_UPA_recep-like"/>
</dbReference>
<dbReference type="PANTHER" id="PTHR17571:SF34">
    <property type="entry name" value="ACROSOMAL PROTEIN SP-10"/>
    <property type="match status" value="1"/>
</dbReference>
<dbReference type="PANTHER" id="PTHR17571">
    <property type="entry name" value="URINARY PROTEIN RUP /ACROSOMAL PROTEIN SP-10"/>
    <property type="match status" value="1"/>
</dbReference>
<dbReference type="Pfam" id="PF00021">
    <property type="entry name" value="UPAR_LY6"/>
    <property type="match status" value="1"/>
</dbReference>
<evidence type="ECO:0000255" key="1"/>
<evidence type="ECO:0000256" key="2">
    <source>
        <dbReference type="SAM" id="MobiDB-lite"/>
    </source>
</evidence>
<evidence type="ECO:0000269" key="3">
    <source>
    </source>
</evidence>
<evidence type="ECO:0000269" key="4">
    <source ref="4"/>
</evidence>
<evidence type="ECO:0000305" key="5"/>
<organism>
    <name type="scientific">Homo sapiens</name>
    <name type="common">Human</name>
    <dbReference type="NCBI Taxonomy" id="9606"/>
    <lineage>
        <taxon>Eukaryota</taxon>
        <taxon>Metazoa</taxon>
        <taxon>Chordata</taxon>
        <taxon>Craniata</taxon>
        <taxon>Vertebrata</taxon>
        <taxon>Euteleostomi</taxon>
        <taxon>Mammalia</taxon>
        <taxon>Eutheria</taxon>
        <taxon>Euarchontoglires</taxon>
        <taxon>Primates</taxon>
        <taxon>Haplorrhini</taxon>
        <taxon>Catarrhini</taxon>
        <taxon>Hominidae</taxon>
        <taxon>Homo</taxon>
    </lineage>
</organism>
<keyword id="KW-0025">Alternative splicing</keyword>
<keyword id="KW-0968">Cytoplasmic vesicle</keyword>
<keyword id="KW-0903">Direct protein sequencing</keyword>
<keyword id="KW-0325">Glycoprotein</keyword>
<keyword id="KW-1267">Proteomics identification</keyword>
<keyword id="KW-1185">Reference proteome</keyword>
<keyword id="KW-0677">Repeat</keyword>
<keyword id="KW-0732">Signal</keyword>
<protein>
    <recommendedName>
        <fullName>Acrosomal protein SP-10</fullName>
    </recommendedName>
    <alternativeName>
        <fullName>Acrosomal vesicle protein 1</fullName>
    </alternativeName>
</protein>
<comment type="interaction">
    <interactant intactId="EBI-25884472">
        <id>P26436</id>
    </interactant>
    <interactant intactId="EBI-1045797">
        <id>Q8N5K1</id>
        <label>CISD2</label>
    </interactant>
    <organismsDiffer>false</organismsDiffer>
    <experiments>3</experiments>
</comment>
<comment type="interaction">
    <interactant intactId="EBI-25884472">
        <id>P26436</id>
    </interactant>
    <interactant intactId="EBI-25929070">
        <id>Q9BZ23-2</id>
        <label>PANK2</label>
    </interactant>
    <organismsDiffer>false</organismsDiffer>
    <experiments>3</experiments>
</comment>
<comment type="interaction">
    <interactant intactId="EBI-25884472">
        <id>P26436</id>
    </interactant>
    <interactant intactId="EBI-1237011">
        <id>P50897</id>
        <label>PPT1</label>
    </interactant>
    <organismsDiffer>false</organismsDiffer>
    <experiments>3</experiments>
</comment>
<comment type="interaction">
    <interactant intactId="EBI-25884472">
        <id>P26436</id>
    </interactant>
    <interactant intactId="EBI-5235340">
        <id>Q7Z699</id>
        <label>SPRED1</label>
    </interactant>
    <organismsDiffer>false</organismsDiffer>
    <experiments>3</experiments>
</comment>
<comment type="interaction">
    <interactant intactId="EBI-25884472">
        <id>P26436</id>
    </interactant>
    <interactant intactId="EBI-12806590">
        <id>Q86WV8</id>
        <label>TSC1</label>
    </interactant>
    <organismsDiffer>false</organismsDiffer>
    <experiments>3</experiments>
</comment>
<comment type="subcellular location">
    <subcellularLocation>
        <location>Cytoplasmic vesicle</location>
        <location>Secretory vesicle</location>
        <location>Acrosome</location>
    </subcellularLocation>
    <text>Nascent acrosomal vesicle of Golgi phase spermatids.</text>
</comment>
<comment type="alternative products">
    <event type="alternative splicing"/>
    <isoform>
        <id>P26436-1</id>
        <name>1</name>
        <sequence type="displayed"/>
    </isoform>
    <isoform>
        <id>P26436-2</id>
        <name>2</name>
        <sequence type="described" ref="VSP_004127"/>
    </isoform>
    <isoform>
        <id>P26436-3</id>
        <name>3</name>
        <sequence type="described" ref="VSP_004120"/>
    </isoform>
    <isoform>
        <id>P26436-4</id>
        <name>4</name>
        <sequence type="described" ref="VSP_004121"/>
    </isoform>
    <isoform>
        <id>P26436-5</id>
        <name>5</name>
        <sequence type="described" ref="VSP_004121 VSP_004127"/>
    </isoform>
    <isoform>
        <id>P26436-6</id>
        <name>6</name>
        <sequence type="described" ref="VSP_004122"/>
    </isoform>
    <isoform>
        <id>P26436-7</id>
        <name>7</name>
        <sequence type="described" ref="VSP_004120 VSP_004125"/>
    </isoform>
    <isoform>
        <id>P26436-8</id>
        <name>8</name>
        <sequence type="described" ref="VSP_004121 VSP_004128"/>
    </isoform>
    <isoform>
        <id>P26436-9</id>
        <name>9</name>
        <sequence type="described" ref="VSP_004121 VSP_004126"/>
    </isoform>
    <isoform>
        <id>P26436-10</id>
        <name>10</name>
        <sequence type="described" ref="VSP_004123"/>
    </isoform>
    <isoform>
        <id>P26436-11</id>
        <name>11</name>
        <sequence type="described" ref="VSP_004124"/>
    </isoform>
    <text>Additional isoforms seem to exist.</text>
</comment>
<comment type="tissue specificity">
    <text>Testis.</text>
</comment>
<reference key="1">
    <citation type="journal article" date="1990" name="Biol. Reprod.">
        <title>Cloning and sequencing of cDNAs coding for the human intra-acrosomal antigen SP-10.</title>
        <authorList>
            <person name="Wright R.M."/>
            <person name="John E."/>
            <person name="Klotz K."/>
            <person name="Flickinger C.J."/>
            <person name="Herr J.C."/>
        </authorList>
    </citation>
    <scope>NUCLEOTIDE SEQUENCE [MRNA]</scope>
    <source>
        <tissue>Testis</tissue>
    </source>
</reference>
<reference key="2">
    <citation type="journal article" date="1990" name="Biol. Reprod.">
        <authorList>
            <person name="Wright R.M."/>
            <person name="John E."/>
            <person name="Klotz K."/>
            <person name="Flickinger C.J."/>
            <person name="Herr J.C."/>
        </authorList>
    </citation>
    <scope>ERRATUM OF PUBMED:1693291</scope>
    <scope>SEQUENCE REVISION</scope>
</reference>
<reference key="3">
    <citation type="journal article" date="1993" name="Biol. Reprod.">
        <title>Cloning and characterization of the gene coding for the human acrosomal protein SP-10.</title>
        <authorList>
            <person name="Wright R.M."/>
            <person name="Suri A.K."/>
            <person name="Kornreich B."/>
            <person name="Flickinger C.J."/>
            <person name="Herr J.C."/>
        </authorList>
    </citation>
    <scope>NUCLEOTIDE SEQUENCE [GENOMIC DNA]</scope>
    <scope>VARIANT ARG-126</scope>
</reference>
<reference key="4">
    <citation type="submission" date="2005-04" db="EMBL/GenBank/DDBJ databases">
        <authorList>
            <person name="Suzuki Y."/>
            <person name="Sugano S."/>
            <person name="Totoki Y."/>
            <person name="Toyoda A."/>
            <person name="Takeda T."/>
            <person name="Sakaki Y."/>
            <person name="Tanaka A."/>
            <person name="Yokoyama S."/>
        </authorList>
    </citation>
    <scope>NUCLEOTIDE SEQUENCE [LARGE SCALE MRNA] (ISOFORM 1)</scope>
    <scope>VARIANT ARG-126</scope>
    <source>
        <tissue>Testis</tissue>
    </source>
</reference>
<reference key="5">
    <citation type="journal article" date="2004" name="Genome Res.">
        <title>The status, quality, and expansion of the NIH full-length cDNA project: the Mammalian Gene Collection (MGC).</title>
        <authorList>
            <consortium name="The MGC Project Team"/>
        </authorList>
    </citation>
    <scope>NUCLEOTIDE SEQUENCE [LARGE SCALE MRNA]</scope>
    <source>
        <tissue>Testis</tissue>
    </source>
</reference>
<reference key="6">
    <citation type="journal article" date="1995" name="Mol. Reprod. Dev.">
        <title>Characterization of alternatively spliced human SP-10 mRNAs.</title>
        <authorList>
            <person name="Freemerman A.J."/>
            <person name="Flickinger C.J."/>
            <person name="Herr J.C."/>
        </authorList>
    </citation>
    <scope>ALTERNATIVE SPLICING</scope>
    <source>
        <tissue>Testis</tissue>
    </source>
</reference>
<reference key="7">
    <citation type="journal article" date="1992" name="Biol. Reprod.">
        <title>Purification and microsequencing of the intra-acrosomal protein SP-10. Evidence that SP-10 heterogeneity results from endoproteolytic processes.</title>
        <authorList>
            <person name="Herr J.C."/>
            <person name="Klotz K."/>
            <person name="Shannon J."/>
            <person name="Wright R.M."/>
            <person name="Flickinger C.J."/>
        </authorList>
    </citation>
    <scope>PROTEIN SEQUENCE OF 78-100; 106-122 AND 127-151</scope>
</reference>
<feature type="signal peptide" evidence="1">
    <location>
        <begin position="1"/>
        <end position="21"/>
    </location>
</feature>
<feature type="chain" id="PRO_0000020760" description="Acrosomal protein SP-10">
    <location>
        <begin position="22"/>
        <end position="265"/>
    </location>
</feature>
<feature type="repeat" description="1-1">
    <location>
        <begin position="66"/>
        <end position="70"/>
    </location>
</feature>
<feature type="repeat" description="1-2">
    <location>
        <begin position="71"/>
        <end position="75"/>
    </location>
</feature>
<feature type="repeat" description="2-1">
    <location>
        <begin position="85"/>
        <end position="88"/>
    </location>
</feature>
<feature type="repeat" description="1-3">
    <location>
        <begin position="91"/>
        <end position="95"/>
    </location>
</feature>
<feature type="repeat" description="3-1">
    <location>
        <begin position="110"/>
        <end position="114"/>
    </location>
</feature>
<feature type="repeat" description="3-2">
    <location>
        <begin position="115"/>
        <end position="119"/>
    </location>
</feature>
<feature type="repeat" description="2-2">
    <location>
        <begin position="120"/>
        <end position="123"/>
    </location>
</feature>
<feature type="repeat" description="3-3">
    <location>
        <begin position="125"/>
        <end position="129"/>
    </location>
</feature>
<feature type="repeat" description="3-4">
    <location>
        <begin position="135"/>
        <end position="139"/>
    </location>
</feature>
<feature type="repeat" description="3-5">
    <location>
        <begin position="140"/>
        <end position="144"/>
    </location>
</feature>
<feature type="repeat" description="2-3">
    <location>
        <begin position="145"/>
        <end position="148"/>
    </location>
</feature>
<feature type="repeat" description="3-6">
    <location>
        <begin position="150"/>
        <end position="154"/>
    </location>
</feature>
<feature type="repeat" description="3-7">
    <location>
        <begin position="155"/>
        <end position="159"/>
    </location>
</feature>
<feature type="repeat" description="3-8">
    <location>
        <begin position="160"/>
        <end position="164"/>
    </location>
</feature>
<feature type="repeat" description="2-4">
    <location>
        <begin position="165"/>
        <end position="168"/>
    </location>
</feature>
<feature type="repeat" description="3-9">
    <location>
        <begin position="170"/>
        <end position="174"/>
    </location>
</feature>
<feature type="region of interest" description="Disordered" evidence="2">
    <location>
        <begin position="62"/>
        <end position="181"/>
    </location>
</feature>
<feature type="region of interest" description="3 X 5 AA repeats of S-E-H-[GA]-S">
    <location>
        <begin position="66"/>
        <end position="95"/>
    </location>
</feature>
<feature type="region of interest" description="4 X 4 AA repeats of S-G-E-H">
    <location>
        <begin position="85"/>
        <end position="168"/>
    </location>
</feature>
<feature type="region of interest" description="9 X 5 AA repeats of [SV]-G-E-Q-[PSA]">
    <location>
        <begin position="110"/>
        <end position="174"/>
    </location>
</feature>
<feature type="compositionally biased region" description="Basic and acidic residues" evidence="2">
    <location>
        <begin position="69"/>
        <end position="110"/>
    </location>
</feature>
<feature type="compositionally biased region" description="Polar residues" evidence="2">
    <location>
        <begin position="152"/>
        <end position="163"/>
    </location>
</feature>
<feature type="glycosylation site" description="N-linked (GlcNAc...) asparagine" evidence="1">
    <location>
        <position position="258"/>
    </location>
</feature>
<feature type="splice variant" id="VSP_004124" description="In isoform 11." evidence="5">
    <location>
        <begin position="41"/>
        <end position="224"/>
    </location>
</feature>
<feature type="splice variant" id="VSP_004123" description="In isoform 10." evidence="5">
    <location>
        <begin position="41"/>
        <end position="184"/>
    </location>
</feature>
<feature type="splice variant" id="VSP_004122" description="In isoform 6." evidence="5">
    <location>
        <begin position="41"/>
        <end position="135"/>
    </location>
</feature>
<feature type="splice variant" id="VSP_004121" description="In isoform 4, isoform 5, isoform 8 and isoform 9." evidence="5">
    <location>
        <begin position="41"/>
        <end position="110"/>
    </location>
</feature>
<feature type="splice variant" id="VSP_004120" description="In isoform 3 and isoform 7." evidence="5">
    <location>
        <begin position="41"/>
        <end position="95"/>
    </location>
</feature>
<feature type="splice variant" id="VSP_004125" description="In isoform 7." evidence="5">
    <location>
        <begin position="111"/>
        <end position="155"/>
    </location>
</feature>
<feature type="splice variant" id="VSP_004126" description="In isoform 9." evidence="5">
    <location>
        <begin position="121"/>
        <end position="165"/>
    </location>
</feature>
<feature type="splice variant" id="VSP_004127" description="In isoform 2 and isoform 5." evidence="5">
    <location>
        <begin position="166"/>
        <end position="184"/>
    </location>
</feature>
<feature type="splice variant" id="VSP_004128" description="In isoform 8." evidence="5">
    <location>
        <begin position="185"/>
        <end position="224"/>
    </location>
</feature>
<feature type="sequence variant" id="VAR_050680" description="In dbSNP:rs34788353." evidence="3 4">
    <original>G</original>
    <variation>R</variation>
    <location>
        <position position="126"/>
    </location>
</feature>
<feature type="sequence conflict" description="In Ref. 7; AA sequence." evidence="5" ref="7">
    <original>S</original>
    <variation>E</variation>
    <location>
        <position position="91"/>
    </location>
</feature>
<proteinExistence type="evidence at protein level"/>
<sequence length="265" mass="28156">MNRFLLLMSLYLLGSARGTSSQPNELSGSIDHQTSVQQLPGEFFSLENPSDAEALYETSSGLNTLSEHGSSEHGSSKHTVAEHTSGEHAESEHASGEPAATEHAEGEHTVGEQPSGEQPSGEHLSGEQPLSELESGEQPSDEQPSGEHGSGEQPSGEQASGEQPSGEHASGEQASGAPISSTSTGTILNCYTCAYMNDQGKCLRGEGTCITQNSQQCMLKKIFEGGKLQFMVQGCENMCPSMNLFSHGTRMQIICCRNQSFCNKI</sequence>
<accession>P26436</accession>
<accession>Q53FF4</accession>
<name>ASPX_HUMAN</name>
<gene>
    <name type="primary">ACRV1</name>
</gene>